<reference key="1">
    <citation type="journal article" date="2007" name="Proc. Natl. Acad. Sci. U.S.A.">
        <title>Deep-sea vent epsilon-proteobacterial genomes provide insights into emergence of pathogens.</title>
        <authorList>
            <person name="Nakagawa S."/>
            <person name="Takaki Y."/>
            <person name="Shimamura S."/>
            <person name="Reysenbach A.-L."/>
            <person name="Takai K."/>
            <person name="Horikoshi K."/>
        </authorList>
    </citation>
    <scope>NUCLEOTIDE SEQUENCE [LARGE SCALE GENOMIC DNA]</scope>
    <source>
        <strain>NBC37-1</strain>
    </source>
</reference>
<dbReference type="EC" id="5.4.3.8" evidence="1"/>
<dbReference type="EMBL" id="AP009179">
    <property type="protein sequence ID" value="BAF72208.1"/>
    <property type="molecule type" value="Genomic_DNA"/>
</dbReference>
<dbReference type="RefSeq" id="WP_011980941.1">
    <property type="nucleotide sequence ID" value="NC_009663.1"/>
</dbReference>
<dbReference type="SMR" id="A6Q9P9"/>
<dbReference type="STRING" id="387093.SUN_1254"/>
<dbReference type="KEGG" id="sun:SUN_1254"/>
<dbReference type="eggNOG" id="COG0001">
    <property type="taxonomic scope" value="Bacteria"/>
</dbReference>
<dbReference type="HOGENOM" id="CLU_016922_1_5_7"/>
<dbReference type="OrthoDB" id="9801052at2"/>
<dbReference type="UniPathway" id="UPA00251">
    <property type="reaction ID" value="UER00317"/>
</dbReference>
<dbReference type="Proteomes" id="UP000006378">
    <property type="component" value="Chromosome"/>
</dbReference>
<dbReference type="GO" id="GO:0005737">
    <property type="term" value="C:cytoplasm"/>
    <property type="evidence" value="ECO:0007669"/>
    <property type="project" value="UniProtKB-SubCell"/>
</dbReference>
<dbReference type="GO" id="GO:0042286">
    <property type="term" value="F:glutamate-1-semialdehyde 2,1-aminomutase activity"/>
    <property type="evidence" value="ECO:0007669"/>
    <property type="project" value="UniProtKB-UniRule"/>
</dbReference>
<dbReference type="GO" id="GO:0030170">
    <property type="term" value="F:pyridoxal phosphate binding"/>
    <property type="evidence" value="ECO:0007669"/>
    <property type="project" value="InterPro"/>
</dbReference>
<dbReference type="GO" id="GO:0008483">
    <property type="term" value="F:transaminase activity"/>
    <property type="evidence" value="ECO:0007669"/>
    <property type="project" value="InterPro"/>
</dbReference>
<dbReference type="GO" id="GO:0006782">
    <property type="term" value="P:protoporphyrinogen IX biosynthetic process"/>
    <property type="evidence" value="ECO:0007669"/>
    <property type="project" value="UniProtKB-UniRule"/>
</dbReference>
<dbReference type="CDD" id="cd00610">
    <property type="entry name" value="OAT_like"/>
    <property type="match status" value="1"/>
</dbReference>
<dbReference type="FunFam" id="3.40.640.10:FF:000021">
    <property type="entry name" value="Glutamate-1-semialdehyde 2,1-aminomutase"/>
    <property type="match status" value="1"/>
</dbReference>
<dbReference type="Gene3D" id="3.90.1150.10">
    <property type="entry name" value="Aspartate Aminotransferase, domain 1"/>
    <property type="match status" value="1"/>
</dbReference>
<dbReference type="Gene3D" id="3.40.640.10">
    <property type="entry name" value="Type I PLP-dependent aspartate aminotransferase-like (Major domain)"/>
    <property type="match status" value="1"/>
</dbReference>
<dbReference type="HAMAP" id="MF_00375">
    <property type="entry name" value="HemL_aminotrans_3"/>
    <property type="match status" value="1"/>
</dbReference>
<dbReference type="InterPro" id="IPR004639">
    <property type="entry name" value="4pyrrol_synth_GluAld_NH2Trfase"/>
</dbReference>
<dbReference type="InterPro" id="IPR005814">
    <property type="entry name" value="Aminotrans_3"/>
</dbReference>
<dbReference type="InterPro" id="IPR049704">
    <property type="entry name" value="Aminotrans_3_PPA_site"/>
</dbReference>
<dbReference type="InterPro" id="IPR015424">
    <property type="entry name" value="PyrdxlP-dep_Trfase"/>
</dbReference>
<dbReference type="InterPro" id="IPR015421">
    <property type="entry name" value="PyrdxlP-dep_Trfase_major"/>
</dbReference>
<dbReference type="InterPro" id="IPR015422">
    <property type="entry name" value="PyrdxlP-dep_Trfase_small"/>
</dbReference>
<dbReference type="NCBIfam" id="TIGR00713">
    <property type="entry name" value="hemL"/>
    <property type="match status" value="1"/>
</dbReference>
<dbReference type="NCBIfam" id="NF000818">
    <property type="entry name" value="PRK00062.1"/>
    <property type="match status" value="1"/>
</dbReference>
<dbReference type="PANTHER" id="PTHR43713">
    <property type="entry name" value="GLUTAMATE-1-SEMIALDEHYDE 2,1-AMINOMUTASE"/>
    <property type="match status" value="1"/>
</dbReference>
<dbReference type="PANTHER" id="PTHR43713:SF3">
    <property type="entry name" value="GLUTAMATE-1-SEMIALDEHYDE 2,1-AMINOMUTASE 1, CHLOROPLASTIC-RELATED"/>
    <property type="match status" value="1"/>
</dbReference>
<dbReference type="Pfam" id="PF00202">
    <property type="entry name" value="Aminotran_3"/>
    <property type="match status" value="1"/>
</dbReference>
<dbReference type="SUPFAM" id="SSF53383">
    <property type="entry name" value="PLP-dependent transferases"/>
    <property type="match status" value="1"/>
</dbReference>
<dbReference type="PROSITE" id="PS00600">
    <property type="entry name" value="AA_TRANSFER_CLASS_3"/>
    <property type="match status" value="1"/>
</dbReference>
<gene>
    <name evidence="1" type="primary">hemL</name>
    <name type="ordered locus">SUN_1254</name>
</gene>
<name>GSA_SULNB</name>
<comment type="catalytic activity">
    <reaction evidence="1">
        <text>(S)-4-amino-5-oxopentanoate = 5-aminolevulinate</text>
        <dbReference type="Rhea" id="RHEA:14265"/>
        <dbReference type="ChEBI" id="CHEBI:57501"/>
        <dbReference type="ChEBI" id="CHEBI:356416"/>
        <dbReference type="EC" id="5.4.3.8"/>
    </reaction>
</comment>
<comment type="cofactor">
    <cofactor evidence="1">
        <name>pyridoxal 5'-phosphate</name>
        <dbReference type="ChEBI" id="CHEBI:597326"/>
    </cofactor>
</comment>
<comment type="pathway">
    <text evidence="1">Porphyrin-containing compound metabolism; protoporphyrin-IX biosynthesis; 5-aminolevulinate from L-glutamyl-tRNA(Glu): step 2/2.</text>
</comment>
<comment type="subunit">
    <text evidence="1">Homodimer.</text>
</comment>
<comment type="subcellular location">
    <subcellularLocation>
        <location evidence="1">Cytoplasm</location>
    </subcellularLocation>
</comment>
<comment type="similarity">
    <text evidence="1">Belongs to the class-III pyridoxal-phosphate-dependent aminotransferase family. HemL subfamily.</text>
</comment>
<sequence length="430" mass="45655">MAYDKSIAAFEEAYKVIPGGVDSPVRAFSGVEGTPPFIERGEGAYLFDIDGNRYIDYVQSWGPLIFGHTDADIEASVIDSVKKGLSFGAPTTVETELAEEIVLMFESIDKVRFVSSGTEAVMSAIRLARGATGRDNILKFTGCYHGHSDSLLVQAGSGLATFGTPSSPGVPADLTKHTLLGTYNDIESVEKCFADSPEGIACVIIEPIAGNMGLVPADETFLQQLRALCDAHGTLLIFDEVMSGFRASLKGAQGITTVKPDMVTLGKVIGAGMPVGAFGAGAETMAQLSPEGPVYQAGTLSGNPVAMAAGLTSLRKLKANPAIYVELGNKAKKLVEGLKRAADSVNVPMVTDVRGSMFGFFFSDKPVKNFADAMENDQKLFAKFHKGMLDRGIYLACSSFETGFISTAITDEMIDETVKAAYETLKEIKG</sequence>
<accession>A6Q9P9</accession>
<feature type="chain" id="PRO_1000060003" description="Glutamate-1-semialdehyde 2,1-aminomutase">
    <location>
        <begin position="1"/>
        <end position="430"/>
    </location>
</feature>
<feature type="modified residue" description="N6-(pyridoxal phosphate)lysine" evidence="1">
    <location>
        <position position="267"/>
    </location>
</feature>
<organism>
    <name type="scientific">Sulfurovum sp. (strain NBC37-1)</name>
    <dbReference type="NCBI Taxonomy" id="387093"/>
    <lineage>
        <taxon>Bacteria</taxon>
        <taxon>Pseudomonadati</taxon>
        <taxon>Campylobacterota</taxon>
        <taxon>Epsilonproteobacteria</taxon>
        <taxon>Campylobacterales</taxon>
        <taxon>Sulfurovaceae</taxon>
        <taxon>Sulfurovum</taxon>
    </lineage>
</organism>
<proteinExistence type="inferred from homology"/>
<evidence type="ECO:0000255" key="1">
    <source>
        <dbReference type="HAMAP-Rule" id="MF_00375"/>
    </source>
</evidence>
<keyword id="KW-0963">Cytoplasm</keyword>
<keyword id="KW-0413">Isomerase</keyword>
<keyword id="KW-0627">Porphyrin biosynthesis</keyword>
<keyword id="KW-0663">Pyridoxal phosphate</keyword>
<protein>
    <recommendedName>
        <fullName evidence="1">Glutamate-1-semialdehyde 2,1-aminomutase</fullName>
        <shortName evidence="1">GSA</shortName>
        <ecNumber evidence="1">5.4.3.8</ecNumber>
    </recommendedName>
    <alternativeName>
        <fullName evidence="1">Glutamate-1-semialdehyde aminotransferase</fullName>
        <shortName evidence="1">GSA-AT</shortName>
    </alternativeName>
</protein>